<sequence>MLIGSHVSSTDPLAAAEVEGADVVQIFLGNPQSWKAPTLRSDADVLKATALPVYVHAPYLINVASANSRVRIPSRKILQQTCDAAADIGAAAVVVHGGYVADDNDLEDGFQRWRKALDQLQTDVPVYLENTAGGDHAMARRFDTIARLWDVIGETGIGFCLDTCHAWAAGEGLIHVVDRIKAITGRIDLVHCNDSKDEAGSGRDRHANLGSGQIDAELLVAAVKVAGAPVICETAEEGRKDDIAFLREKTSG</sequence>
<dbReference type="EC" id="3.1.21.2" evidence="1"/>
<dbReference type="EMBL" id="Z14314">
    <property type="protein sequence ID" value="CAA78670.1"/>
    <property type="molecule type" value="Genomic_DNA"/>
</dbReference>
<dbReference type="EMBL" id="AL583923">
    <property type="protein sequence ID" value="CAC30843.1"/>
    <property type="molecule type" value="Genomic_DNA"/>
</dbReference>
<dbReference type="PIR" id="S31147">
    <property type="entry name" value="S31147"/>
</dbReference>
<dbReference type="RefSeq" id="NP_302271.1">
    <property type="nucleotide sequence ID" value="NC_002677.1"/>
</dbReference>
<dbReference type="RefSeq" id="WP_010908592.1">
    <property type="nucleotide sequence ID" value="NC_002677.1"/>
</dbReference>
<dbReference type="SMR" id="P30770"/>
<dbReference type="STRING" id="272631.gene:17575737"/>
<dbReference type="KEGG" id="mle:ML1889"/>
<dbReference type="PATRIC" id="fig|272631.5.peg.3579"/>
<dbReference type="Leproma" id="ML1889"/>
<dbReference type="eggNOG" id="COG0648">
    <property type="taxonomic scope" value="Bacteria"/>
</dbReference>
<dbReference type="HOGENOM" id="CLU_025885_0_2_11"/>
<dbReference type="OrthoDB" id="9805666at2"/>
<dbReference type="Proteomes" id="UP000000806">
    <property type="component" value="Chromosome"/>
</dbReference>
<dbReference type="GO" id="GO:0008833">
    <property type="term" value="F:deoxyribonuclease IV (phage-T4-induced) activity"/>
    <property type="evidence" value="ECO:0007669"/>
    <property type="project" value="UniProtKB-UniRule"/>
</dbReference>
<dbReference type="GO" id="GO:0003677">
    <property type="term" value="F:DNA binding"/>
    <property type="evidence" value="ECO:0007669"/>
    <property type="project" value="InterPro"/>
</dbReference>
<dbReference type="GO" id="GO:0003906">
    <property type="term" value="F:DNA-(apurinic or apyrimidinic site) endonuclease activity"/>
    <property type="evidence" value="ECO:0007669"/>
    <property type="project" value="TreeGrafter"/>
</dbReference>
<dbReference type="GO" id="GO:0008081">
    <property type="term" value="F:phosphoric diester hydrolase activity"/>
    <property type="evidence" value="ECO:0007669"/>
    <property type="project" value="TreeGrafter"/>
</dbReference>
<dbReference type="GO" id="GO:0008270">
    <property type="term" value="F:zinc ion binding"/>
    <property type="evidence" value="ECO:0007669"/>
    <property type="project" value="UniProtKB-UniRule"/>
</dbReference>
<dbReference type="GO" id="GO:0006284">
    <property type="term" value="P:base-excision repair"/>
    <property type="evidence" value="ECO:0007669"/>
    <property type="project" value="TreeGrafter"/>
</dbReference>
<dbReference type="CDD" id="cd00019">
    <property type="entry name" value="AP2Ec"/>
    <property type="match status" value="1"/>
</dbReference>
<dbReference type="Gene3D" id="3.20.20.150">
    <property type="entry name" value="Divalent-metal-dependent TIM barrel enzymes"/>
    <property type="match status" value="1"/>
</dbReference>
<dbReference type="HAMAP" id="MF_00152">
    <property type="entry name" value="Nfo"/>
    <property type="match status" value="1"/>
</dbReference>
<dbReference type="InterPro" id="IPR001719">
    <property type="entry name" value="AP_endonuc_2"/>
</dbReference>
<dbReference type="InterPro" id="IPR018246">
    <property type="entry name" value="AP_endonuc_F2_Zn_BS"/>
</dbReference>
<dbReference type="InterPro" id="IPR036237">
    <property type="entry name" value="Xyl_isomerase-like_sf"/>
</dbReference>
<dbReference type="InterPro" id="IPR013022">
    <property type="entry name" value="Xyl_isomerase-like_TIM-brl"/>
</dbReference>
<dbReference type="NCBIfam" id="TIGR00587">
    <property type="entry name" value="nfo"/>
    <property type="match status" value="1"/>
</dbReference>
<dbReference type="NCBIfam" id="NF002198">
    <property type="entry name" value="PRK01060.1-3"/>
    <property type="match status" value="1"/>
</dbReference>
<dbReference type="PANTHER" id="PTHR21445:SF0">
    <property type="entry name" value="APURINIC-APYRIMIDINIC ENDONUCLEASE"/>
    <property type="match status" value="1"/>
</dbReference>
<dbReference type="PANTHER" id="PTHR21445">
    <property type="entry name" value="ENDONUCLEASE IV ENDODEOXYRIBONUCLEASE IV"/>
    <property type="match status" value="1"/>
</dbReference>
<dbReference type="Pfam" id="PF01261">
    <property type="entry name" value="AP_endonuc_2"/>
    <property type="match status" value="1"/>
</dbReference>
<dbReference type="SMART" id="SM00518">
    <property type="entry name" value="AP2Ec"/>
    <property type="match status" value="1"/>
</dbReference>
<dbReference type="SUPFAM" id="SSF51658">
    <property type="entry name" value="Xylose isomerase-like"/>
    <property type="match status" value="1"/>
</dbReference>
<dbReference type="PROSITE" id="PS00729">
    <property type="entry name" value="AP_NUCLEASE_F2_1"/>
    <property type="match status" value="1"/>
</dbReference>
<dbReference type="PROSITE" id="PS00730">
    <property type="entry name" value="AP_NUCLEASE_F2_2"/>
    <property type="match status" value="1"/>
</dbReference>
<dbReference type="PROSITE" id="PS00731">
    <property type="entry name" value="AP_NUCLEASE_F2_3"/>
    <property type="match status" value="1"/>
</dbReference>
<dbReference type="PROSITE" id="PS51432">
    <property type="entry name" value="AP_NUCLEASE_F2_4"/>
    <property type="match status" value="1"/>
</dbReference>
<accession>P30770</accession>
<name>END4_MYCLE</name>
<feature type="chain" id="PRO_0000190854" description="Probable endonuclease 4">
    <location>
        <begin position="1"/>
        <end position="252"/>
    </location>
</feature>
<feature type="binding site" evidence="1">
    <location>
        <position position="56"/>
    </location>
    <ligand>
        <name>Zn(2+)</name>
        <dbReference type="ChEBI" id="CHEBI:29105"/>
        <label>1</label>
    </ligand>
</feature>
<feature type="binding site" evidence="1">
    <location>
        <position position="96"/>
    </location>
    <ligand>
        <name>Zn(2+)</name>
        <dbReference type="ChEBI" id="CHEBI:29105"/>
        <label>1</label>
    </ligand>
</feature>
<feature type="binding site" evidence="1">
    <location>
        <position position="129"/>
    </location>
    <ligand>
        <name>Zn(2+)</name>
        <dbReference type="ChEBI" id="CHEBI:29105"/>
        <label>1</label>
    </ligand>
</feature>
<feature type="binding site" evidence="1">
    <location>
        <position position="129"/>
    </location>
    <ligand>
        <name>Zn(2+)</name>
        <dbReference type="ChEBI" id="CHEBI:29105"/>
        <label>2</label>
    </ligand>
</feature>
<feature type="binding site" evidence="1">
    <location>
        <position position="162"/>
    </location>
    <ligand>
        <name>Zn(2+)</name>
        <dbReference type="ChEBI" id="CHEBI:29105"/>
        <label>2</label>
    </ligand>
</feature>
<feature type="binding site" evidence="1">
    <location>
        <position position="165"/>
    </location>
    <ligand>
        <name>Zn(2+)</name>
        <dbReference type="ChEBI" id="CHEBI:29105"/>
        <label>3</label>
    </ligand>
</feature>
<feature type="binding site" evidence="1">
    <location>
        <position position="191"/>
    </location>
    <ligand>
        <name>Zn(2+)</name>
        <dbReference type="ChEBI" id="CHEBI:29105"/>
        <label>2</label>
    </ligand>
</feature>
<feature type="binding site" evidence="1">
    <location>
        <position position="204"/>
    </location>
    <ligand>
        <name>Zn(2+)</name>
        <dbReference type="ChEBI" id="CHEBI:29105"/>
        <label>3</label>
    </ligand>
</feature>
<feature type="binding site" evidence="1">
    <location>
        <position position="206"/>
    </location>
    <ligand>
        <name>Zn(2+)</name>
        <dbReference type="ChEBI" id="CHEBI:29105"/>
        <label>3</label>
    </ligand>
</feature>
<feature type="binding site" evidence="1">
    <location>
        <position position="233"/>
    </location>
    <ligand>
        <name>Zn(2+)</name>
        <dbReference type="ChEBI" id="CHEBI:29105"/>
        <label>2</label>
    </ligand>
</feature>
<proteinExistence type="inferred from homology"/>
<reference key="1">
    <citation type="journal article" date="1993" name="Mol. Microbiol.">
        <title>Nucleotide sequence of the first cosmid from the Mycobacterium leprae genome project: structure and function of the Rif-Str regions.</title>
        <authorList>
            <person name="Honore N.T."/>
            <person name="Bergh S."/>
            <person name="Chanteau S."/>
            <person name="Doucet-Populaire F."/>
            <person name="Eiglmeier K."/>
            <person name="Garnier T."/>
            <person name="Georges C."/>
            <person name="Launois P."/>
            <person name="Limpaiboon T."/>
            <person name="Newton S."/>
            <person name="Niang K."/>
            <person name="del Portillo P."/>
            <person name="Ramesh G.R."/>
            <person name="Reddi P."/>
            <person name="Ridel P.R."/>
            <person name="Sittisombut N."/>
            <person name="Wu-Hunter S."/>
            <person name="Cole S.T."/>
        </authorList>
    </citation>
    <scope>NUCLEOTIDE SEQUENCE [GENOMIC DNA]</scope>
</reference>
<reference key="2">
    <citation type="journal article" date="2001" name="Nature">
        <title>Massive gene decay in the leprosy bacillus.</title>
        <authorList>
            <person name="Cole S.T."/>
            <person name="Eiglmeier K."/>
            <person name="Parkhill J."/>
            <person name="James K.D."/>
            <person name="Thomson N.R."/>
            <person name="Wheeler P.R."/>
            <person name="Honore N."/>
            <person name="Garnier T."/>
            <person name="Churcher C.M."/>
            <person name="Harris D.E."/>
            <person name="Mungall K.L."/>
            <person name="Basham D."/>
            <person name="Brown D."/>
            <person name="Chillingworth T."/>
            <person name="Connor R."/>
            <person name="Davies R.M."/>
            <person name="Devlin K."/>
            <person name="Duthoy S."/>
            <person name="Feltwell T."/>
            <person name="Fraser A."/>
            <person name="Hamlin N."/>
            <person name="Holroyd S."/>
            <person name="Hornsby T."/>
            <person name="Jagels K."/>
            <person name="Lacroix C."/>
            <person name="Maclean J."/>
            <person name="Moule S."/>
            <person name="Murphy L.D."/>
            <person name="Oliver K."/>
            <person name="Quail M.A."/>
            <person name="Rajandream M.A."/>
            <person name="Rutherford K.M."/>
            <person name="Rutter S."/>
            <person name="Seeger K."/>
            <person name="Simon S."/>
            <person name="Simmonds M."/>
            <person name="Skelton J."/>
            <person name="Squares R."/>
            <person name="Squares S."/>
            <person name="Stevens K."/>
            <person name="Taylor K."/>
            <person name="Whitehead S."/>
            <person name="Woodward J.R."/>
            <person name="Barrell B.G."/>
        </authorList>
    </citation>
    <scope>NUCLEOTIDE SEQUENCE [LARGE SCALE GENOMIC DNA]</scope>
    <source>
        <strain>TN</strain>
    </source>
</reference>
<keyword id="KW-0227">DNA damage</keyword>
<keyword id="KW-0234">DNA repair</keyword>
<keyword id="KW-0255">Endonuclease</keyword>
<keyword id="KW-0378">Hydrolase</keyword>
<keyword id="KW-0479">Metal-binding</keyword>
<keyword id="KW-0540">Nuclease</keyword>
<keyword id="KW-1185">Reference proteome</keyword>
<keyword id="KW-0862">Zinc</keyword>
<comment type="function">
    <text evidence="1">Endonuclease IV plays a role in DNA repair. It cleaves phosphodiester bonds at apurinic or apyrimidinic (AP) sites, generating a 3'-hydroxyl group and a 5'-terminal sugar phosphate.</text>
</comment>
<comment type="catalytic activity">
    <reaction evidence="1">
        <text>Endonucleolytic cleavage to 5'-phosphooligonucleotide end-products.</text>
        <dbReference type="EC" id="3.1.21.2"/>
    </reaction>
</comment>
<comment type="cofactor">
    <cofactor evidence="1">
        <name>Zn(2+)</name>
        <dbReference type="ChEBI" id="CHEBI:29105"/>
    </cofactor>
    <text evidence="1">Binds 3 Zn(2+) ions.</text>
</comment>
<comment type="similarity">
    <text evidence="1">Belongs to the AP endonuclease 2 family.</text>
</comment>
<organism>
    <name type="scientific">Mycobacterium leprae (strain TN)</name>
    <dbReference type="NCBI Taxonomy" id="272631"/>
    <lineage>
        <taxon>Bacteria</taxon>
        <taxon>Bacillati</taxon>
        <taxon>Actinomycetota</taxon>
        <taxon>Actinomycetes</taxon>
        <taxon>Mycobacteriales</taxon>
        <taxon>Mycobacteriaceae</taxon>
        <taxon>Mycobacterium</taxon>
    </lineage>
</organism>
<gene>
    <name evidence="1" type="primary">nfo</name>
    <name type="synonym">end</name>
    <name type="ordered locus">ML1889</name>
</gene>
<protein>
    <recommendedName>
        <fullName evidence="1">Probable endonuclease 4</fullName>
        <ecNumber evidence="1">3.1.21.2</ecNumber>
    </recommendedName>
    <alternativeName>
        <fullName evidence="1">Endodeoxyribonuclease IV</fullName>
    </alternativeName>
    <alternativeName>
        <fullName evidence="1">Endonuclease IV</fullName>
    </alternativeName>
</protein>
<evidence type="ECO:0000255" key="1">
    <source>
        <dbReference type="HAMAP-Rule" id="MF_00152"/>
    </source>
</evidence>